<reference key="1">
    <citation type="journal article" date="2000" name="Nature">
        <title>The genome sequence of the plant pathogen Xylella fastidiosa.</title>
        <authorList>
            <person name="Simpson A.J.G."/>
            <person name="Reinach F.C."/>
            <person name="Arruda P."/>
            <person name="Abreu F.A."/>
            <person name="Acencio M."/>
            <person name="Alvarenga R."/>
            <person name="Alves L.M.C."/>
            <person name="Araya J.E."/>
            <person name="Baia G.S."/>
            <person name="Baptista C.S."/>
            <person name="Barros M.H."/>
            <person name="Bonaccorsi E.D."/>
            <person name="Bordin S."/>
            <person name="Bove J.M."/>
            <person name="Briones M.R.S."/>
            <person name="Bueno M.R.P."/>
            <person name="Camargo A.A."/>
            <person name="Camargo L.E.A."/>
            <person name="Carraro D.M."/>
            <person name="Carrer H."/>
            <person name="Colauto N.B."/>
            <person name="Colombo C."/>
            <person name="Costa F.F."/>
            <person name="Costa M.C.R."/>
            <person name="Costa-Neto C.M."/>
            <person name="Coutinho L.L."/>
            <person name="Cristofani M."/>
            <person name="Dias-Neto E."/>
            <person name="Docena C."/>
            <person name="El-Dorry H."/>
            <person name="Facincani A.P."/>
            <person name="Ferreira A.J.S."/>
            <person name="Ferreira V.C.A."/>
            <person name="Ferro J.A."/>
            <person name="Fraga J.S."/>
            <person name="Franca S.C."/>
            <person name="Franco M.C."/>
            <person name="Frohme M."/>
            <person name="Furlan L.R."/>
            <person name="Garnier M."/>
            <person name="Goldman G.H."/>
            <person name="Goldman M.H.S."/>
            <person name="Gomes S.L."/>
            <person name="Gruber A."/>
            <person name="Ho P.L."/>
            <person name="Hoheisel J.D."/>
            <person name="Junqueira M.L."/>
            <person name="Kemper E.L."/>
            <person name="Kitajima J.P."/>
            <person name="Krieger J.E."/>
            <person name="Kuramae E.E."/>
            <person name="Laigret F."/>
            <person name="Lambais M.R."/>
            <person name="Leite L.C.C."/>
            <person name="Lemos E.G.M."/>
            <person name="Lemos M.V.F."/>
            <person name="Lopes S.A."/>
            <person name="Lopes C.R."/>
            <person name="Machado J.A."/>
            <person name="Machado M.A."/>
            <person name="Madeira A.M.B.N."/>
            <person name="Madeira H.M.F."/>
            <person name="Marino C.L."/>
            <person name="Marques M.V."/>
            <person name="Martins E.A.L."/>
            <person name="Martins E.M.F."/>
            <person name="Matsukuma A.Y."/>
            <person name="Menck C.F.M."/>
            <person name="Miracca E.C."/>
            <person name="Miyaki C.Y."/>
            <person name="Monteiro-Vitorello C.B."/>
            <person name="Moon D.H."/>
            <person name="Nagai M.A."/>
            <person name="Nascimento A.L.T.O."/>
            <person name="Netto L.E.S."/>
            <person name="Nhani A. Jr."/>
            <person name="Nobrega F.G."/>
            <person name="Nunes L.R."/>
            <person name="Oliveira M.A."/>
            <person name="de Oliveira M.C."/>
            <person name="de Oliveira R.C."/>
            <person name="Palmieri D.A."/>
            <person name="Paris A."/>
            <person name="Peixoto B.R."/>
            <person name="Pereira G.A.G."/>
            <person name="Pereira H.A. Jr."/>
            <person name="Pesquero J.B."/>
            <person name="Quaggio R.B."/>
            <person name="Roberto P.G."/>
            <person name="Rodrigues V."/>
            <person name="de Rosa A.J.M."/>
            <person name="de Rosa V.E. Jr."/>
            <person name="de Sa R.G."/>
            <person name="Santelli R.V."/>
            <person name="Sawasaki H.E."/>
            <person name="da Silva A.C.R."/>
            <person name="da Silva A.M."/>
            <person name="da Silva F.R."/>
            <person name="Silva W.A. Jr."/>
            <person name="da Silveira J.F."/>
            <person name="Silvestri M.L.Z."/>
            <person name="Siqueira W.J."/>
            <person name="de Souza A.A."/>
            <person name="de Souza A.P."/>
            <person name="Terenzi M.F."/>
            <person name="Truffi D."/>
            <person name="Tsai S.M."/>
            <person name="Tsuhako M.H."/>
            <person name="Vallada H."/>
            <person name="Van Sluys M.A."/>
            <person name="Verjovski-Almeida S."/>
            <person name="Vettore A.L."/>
            <person name="Zago M.A."/>
            <person name="Zatz M."/>
            <person name="Meidanis J."/>
            <person name="Setubal J.C."/>
        </authorList>
    </citation>
    <scope>NUCLEOTIDE SEQUENCE [LARGE SCALE GENOMIC DNA]</scope>
    <source>
        <strain>9a5c</strain>
    </source>
</reference>
<accession>Q9PD42</accession>
<sequence>MTTFTAKNETVQRDWYLVDAEGKTLGRLATELARRLLGKTKPVYTTHVDTGDYLVVINAEKVVVTGKKLTDKYYHRFTGYVGNLKSESLGQALQRHPERVLEIAVKGMLPKGPLGRAMYRKLKVYTGSKHPHAAQQPQVLDI</sequence>
<gene>
    <name evidence="1" type="primary">rplM</name>
    <name type="ordered locus">XF_1537</name>
</gene>
<keyword id="KW-0687">Ribonucleoprotein</keyword>
<keyword id="KW-0689">Ribosomal protein</keyword>
<feature type="chain" id="PRO_0000306401" description="Large ribosomal subunit protein uL13">
    <location>
        <begin position="1"/>
        <end position="142"/>
    </location>
</feature>
<organism>
    <name type="scientific">Xylella fastidiosa (strain 9a5c)</name>
    <dbReference type="NCBI Taxonomy" id="160492"/>
    <lineage>
        <taxon>Bacteria</taxon>
        <taxon>Pseudomonadati</taxon>
        <taxon>Pseudomonadota</taxon>
        <taxon>Gammaproteobacteria</taxon>
        <taxon>Lysobacterales</taxon>
        <taxon>Lysobacteraceae</taxon>
        <taxon>Xylella</taxon>
    </lineage>
</organism>
<proteinExistence type="inferred from homology"/>
<comment type="function">
    <text evidence="1">This protein is one of the early assembly proteins of the 50S ribosomal subunit, although it is not seen to bind rRNA by itself. It is important during the early stages of 50S assembly.</text>
</comment>
<comment type="subunit">
    <text evidence="1">Part of the 50S ribosomal subunit.</text>
</comment>
<comment type="similarity">
    <text evidence="1">Belongs to the universal ribosomal protein uL13 family.</text>
</comment>
<evidence type="ECO:0000255" key="1">
    <source>
        <dbReference type="HAMAP-Rule" id="MF_01366"/>
    </source>
</evidence>
<evidence type="ECO:0000305" key="2"/>
<dbReference type="EMBL" id="AE003849">
    <property type="protein sequence ID" value="AAF84346.1"/>
    <property type="molecule type" value="Genomic_DNA"/>
</dbReference>
<dbReference type="PIR" id="F82669">
    <property type="entry name" value="F82669"/>
</dbReference>
<dbReference type="RefSeq" id="WP_010894037.1">
    <property type="nucleotide sequence ID" value="NC_002488.3"/>
</dbReference>
<dbReference type="SMR" id="Q9PD42"/>
<dbReference type="STRING" id="160492.XF_1537"/>
<dbReference type="KEGG" id="xfa:XF_1537"/>
<dbReference type="eggNOG" id="COG0102">
    <property type="taxonomic scope" value="Bacteria"/>
</dbReference>
<dbReference type="HOGENOM" id="CLU_082184_2_2_6"/>
<dbReference type="Proteomes" id="UP000000812">
    <property type="component" value="Chromosome"/>
</dbReference>
<dbReference type="GO" id="GO:0022625">
    <property type="term" value="C:cytosolic large ribosomal subunit"/>
    <property type="evidence" value="ECO:0007669"/>
    <property type="project" value="TreeGrafter"/>
</dbReference>
<dbReference type="GO" id="GO:0003729">
    <property type="term" value="F:mRNA binding"/>
    <property type="evidence" value="ECO:0007669"/>
    <property type="project" value="TreeGrafter"/>
</dbReference>
<dbReference type="GO" id="GO:0003735">
    <property type="term" value="F:structural constituent of ribosome"/>
    <property type="evidence" value="ECO:0007669"/>
    <property type="project" value="InterPro"/>
</dbReference>
<dbReference type="GO" id="GO:0017148">
    <property type="term" value="P:negative regulation of translation"/>
    <property type="evidence" value="ECO:0007669"/>
    <property type="project" value="TreeGrafter"/>
</dbReference>
<dbReference type="GO" id="GO:0006412">
    <property type="term" value="P:translation"/>
    <property type="evidence" value="ECO:0007669"/>
    <property type="project" value="UniProtKB-UniRule"/>
</dbReference>
<dbReference type="CDD" id="cd00392">
    <property type="entry name" value="Ribosomal_L13"/>
    <property type="match status" value="1"/>
</dbReference>
<dbReference type="FunFam" id="3.90.1180.10:FF:000001">
    <property type="entry name" value="50S ribosomal protein L13"/>
    <property type="match status" value="1"/>
</dbReference>
<dbReference type="Gene3D" id="3.90.1180.10">
    <property type="entry name" value="Ribosomal protein L13"/>
    <property type="match status" value="1"/>
</dbReference>
<dbReference type="HAMAP" id="MF_01366">
    <property type="entry name" value="Ribosomal_uL13"/>
    <property type="match status" value="1"/>
</dbReference>
<dbReference type="InterPro" id="IPR005822">
    <property type="entry name" value="Ribosomal_uL13"/>
</dbReference>
<dbReference type="InterPro" id="IPR005823">
    <property type="entry name" value="Ribosomal_uL13_bac-type"/>
</dbReference>
<dbReference type="InterPro" id="IPR023563">
    <property type="entry name" value="Ribosomal_uL13_CS"/>
</dbReference>
<dbReference type="InterPro" id="IPR036899">
    <property type="entry name" value="Ribosomal_uL13_sf"/>
</dbReference>
<dbReference type="NCBIfam" id="TIGR01066">
    <property type="entry name" value="rplM_bact"/>
    <property type="match status" value="1"/>
</dbReference>
<dbReference type="PANTHER" id="PTHR11545:SF2">
    <property type="entry name" value="LARGE RIBOSOMAL SUBUNIT PROTEIN UL13M"/>
    <property type="match status" value="1"/>
</dbReference>
<dbReference type="PANTHER" id="PTHR11545">
    <property type="entry name" value="RIBOSOMAL PROTEIN L13"/>
    <property type="match status" value="1"/>
</dbReference>
<dbReference type="Pfam" id="PF00572">
    <property type="entry name" value="Ribosomal_L13"/>
    <property type="match status" value="1"/>
</dbReference>
<dbReference type="PIRSF" id="PIRSF002181">
    <property type="entry name" value="Ribosomal_L13"/>
    <property type="match status" value="1"/>
</dbReference>
<dbReference type="SUPFAM" id="SSF52161">
    <property type="entry name" value="Ribosomal protein L13"/>
    <property type="match status" value="1"/>
</dbReference>
<dbReference type="PROSITE" id="PS00783">
    <property type="entry name" value="RIBOSOMAL_L13"/>
    <property type="match status" value="1"/>
</dbReference>
<protein>
    <recommendedName>
        <fullName evidence="1">Large ribosomal subunit protein uL13</fullName>
    </recommendedName>
    <alternativeName>
        <fullName evidence="2">50S ribosomal protein L13</fullName>
    </alternativeName>
</protein>
<name>RL13_XYLFA</name>